<accession>B5F8K0</accession>
<gene>
    <name evidence="1" type="primary">aroB</name>
    <name type="ordered locus">SeAg_B3685</name>
</gene>
<proteinExistence type="inferred from homology"/>
<protein>
    <recommendedName>
        <fullName evidence="1">3-dehydroquinate synthase</fullName>
        <shortName evidence="1">DHQS</shortName>
        <ecNumber evidence="1">4.2.3.4</ecNumber>
    </recommendedName>
</protein>
<feature type="chain" id="PRO_1000094594" description="3-dehydroquinate synthase">
    <location>
        <begin position="1"/>
        <end position="362"/>
    </location>
</feature>
<feature type="binding site" evidence="1">
    <location>
        <begin position="71"/>
        <end position="76"/>
    </location>
    <ligand>
        <name>NAD(+)</name>
        <dbReference type="ChEBI" id="CHEBI:57540"/>
    </ligand>
</feature>
<feature type="binding site" evidence="1">
    <location>
        <begin position="105"/>
        <end position="109"/>
    </location>
    <ligand>
        <name>NAD(+)</name>
        <dbReference type="ChEBI" id="CHEBI:57540"/>
    </ligand>
</feature>
<feature type="binding site" evidence="1">
    <location>
        <begin position="129"/>
        <end position="130"/>
    </location>
    <ligand>
        <name>NAD(+)</name>
        <dbReference type="ChEBI" id="CHEBI:57540"/>
    </ligand>
</feature>
<feature type="binding site" evidence="1">
    <location>
        <position position="142"/>
    </location>
    <ligand>
        <name>NAD(+)</name>
        <dbReference type="ChEBI" id="CHEBI:57540"/>
    </ligand>
</feature>
<feature type="binding site" evidence="1">
    <location>
        <position position="151"/>
    </location>
    <ligand>
        <name>NAD(+)</name>
        <dbReference type="ChEBI" id="CHEBI:57540"/>
    </ligand>
</feature>
<feature type="binding site" evidence="1">
    <location>
        <begin position="169"/>
        <end position="172"/>
    </location>
    <ligand>
        <name>NAD(+)</name>
        <dbReference type="ChEBI" id="CHEBI:57540"/>
    </ligand>
</feature>
<feature type="binding site" evidence="1">
    <location>
        <position position="184"/>
    </location>
    <ligand>
        <name>Zn(2+)</name>
        <dbReference type="ChEBI" id="CHEBI:29105"/>
    </ligand>
</feature>
<feature type="binding site" evidence="1">
    <location>
        <position position="247"/>
    </location>
    <ligand>
        <name>Zn(2+)</name>
        <dbReference type="ChEBI" id="CHEBI:29105"/>
    </ligand>
</feature>
<feature type="binding site" evidence="1">
    <location>
        <position position="264"/>
    </location>
    <ligand>
        <name>Zn(2+)</name>
        <dbReference type="ChEBI" id="CHEBI:29105"/>
    </ligand>
</feature>
<dbReference type="EC" id="4.2.3.4" evidence="1"/>
<dbReference type="EMBL" id="CP001138">
    <property type="protein sequence ID" value="ACH51122.1"/>
    <property type="molecule type" value="Genomic_DNA"/>
</dbReference>
<dbReference type="RefSeq" id="WP_000439824.1">
    <property type="nucleotide sequence ID" value="NC_011149.1"/>
</dbReference>
<dbReference type="SMR" id="B5F8K0"/>
<dbReference type="KEGG" id="sea:SeAg_B3685"/>
<dbReference type="HOGENOM" id="CLU_001201_0_2_6"/>
<dbReference type="UniPathway" id="UPA00053">
    <property type="reaction ID" value="UER00085"/>
</dbReference>
<dbReference type="Proteomes" id="UP000008819">
    <property type="component" value="Chromosome"/>
</dbReference>
<dbReference type="GO" id="GO:0005737">
    <property type="term" value="C:cytoplasm"/>
    <property type="evidence" value="ECO:0007669"/>
    <property type="project" value="UniProtKB-SubCell"/>
</dbReference>
<dbReference type="GO" id="GO:0003856">
    <property type="term" value="F:3-dehydroquinate synthase activity"/>
    <property type="evidence" value="ECO:0007669"/>
    <property type="project" value="UniProtKB-UniRule"/>
</dbReference>
<dbReference type="GO" id="GO:0046872">
    <property type="term" value="F:metal ion binding"/>
    <property type="evidence" value="ECO:0007669"/>
    <property type="project" value="UniProtKB-KW"/>
</dbReference>
<dbReference type="GO" id="GO:0000166">
    <property type="term" value="F:nucleotide binding"/>
    <property type="evidence" value="ECO:0007669"/>
    <property type="project" value="UniProtKB-KW"/>
</dbReference>
<dbReference type="GO" id="GO:0008652">
    <property type="term" value="P:amino acid biosynthetic process"/>
    <property type="evidence" value="ECO:0007669"/>
    <property type="project" value="UniProtKB-KW"/>
</dbReference>
<dbReference type="GO" id="GO:0009073">
    <property type="term" value="P:aromatic amino acid family biosynthetic process"/>
    <property type="evidence" value="ECO:0007669"/>
    <property type="project" value="UniProtKB-KW"/>
</dbReference>
<dbReference type="GO" id="GO:0009423">
    <property type="term" value="P:chorismate biosynthetic process"/>
    <property type="evidence" value="ECO:0007669"/>
    <property type="project" value="UniProtKB-UniRule"/>
</dbReference>
<dbReference type="CDD" id="cd08195">
    <property type="entry name" value="DHQS"/>
    <property type="match status" value="1"/>
</dbReference>
<dbReference type="FunFam" id="1.20.1090.10:FF:000002">
    <property type="entry name" value="3-dehydroquinate synthase"/>
    <property type="match status" value="1"/>
</dbReference>
<dbReference type="FunFam" id="3.40.50.1970:FF:000001">
    <property type="entry name" value="3-dehydroquinate synthase"/>
    <property type="match status" value="1"/>
</dbReference>
<dbReference type="Gene3D" id="3.40.50.1970">
    <property type="match status" value="1"/>
</dbReference>
<dbReference type="Gene3D" id="1.20.1090.10">
    <property type="entry name" value="Dehydroquinate synthase-like - alpha domain"/>
    <property type="match status" value="1"/>
</dbReference>
<dbReference type="HAMAP" id="MF_00110">
    <property type="entry name" value="DHQ_synthase"/>
    <property type="match status" value="1"/>
</dbReference>
<dbReference type="InterPro" id="IPR050071">
    <property type="entry name" value="Dehydroquinate_synthase"/>
</dbReference>
<dbReference type="InterPro" id="IPR016037">
    <property type="entry name" value="DHQ_synth_AroB"/>
</dbReference>
<dbReference type="InterPro" id="IPR030963">
    <property type="entry name" value="DHQ_synth_fam"/>
</dbReference>
<dbReference type="InterPro" id="IPR030960">
    <property type="entry name" value="DHQS/DOIS_N"/>
</dbReference>
<dbReference type="InterPro" id="IPR056179">
    <property type="entry name" value="DHQS_C"/>
</dbReference>
<dbReference type="NCBIfam" id="TIGR01357">
    <property type="entry name" value="aroB"/>
    <property type="match status" value="1"/>
</dbReference>
<dbReference type="PANTHER" id="PTHR43622">
    <property type="entry name" value="3-DEHYDROQUINATE SYNTHASE"/>
    <property type="match status" value="1"/>
</dbReference>
<dbReference type="PANTHER" id="PTHR43622:SF7">
    <property type="entry name" value="3-DEHYDROQUINATE SYNTHASE, CHLOROPLASTIC"/>
    <property type="match status" value="1"/>
</dbReference>
<dbReference type="Pfam" id="PF01761">
    <property type="entry name" value="DHQ_synthase"/>
    <property type="match status" value="1"/>
</dbReference>
<dbReference type="Pfam" id="PF24621">
    <property type="entry name" value="DHQS_C"/>
    <property type="match status" value="1"/>
</dbReference>
<dbReference type="PIRSF" id="PIRSF001455">
    <property type="entry name" value="DHQ_synth"/>
    <property type="match status" value="1"/>
</dbReference>
<dbReference type="SUPFAM" id="SSF56796">
    <property type="entry name" value="Dehydroquinate synthase-like"/>
    <property type="match status" value="1"/>
</dbReference>
<comment type="function">
    <text evidence="1">Catalyzes the conversion of 3-deoxy-D-arabino-heptulosonate 7-phosphate (DAHP) to dehydroquinate (DHQ).</text>
</comment>
<comment type="catalytic activity">
    <reaction evidence="1">
        <text>7-phospho-2-dehydro-3-deoxy-D-arabino-heptonate = 3-dehydroquinate + phosphate</text>
        <dbReference type="Rhea" id="RHEA:21968"/>
        <dbReference type="ChEBI" id="CHEBI:32364"/>
        <dbReference type="ChEBI" id="CHEBI:43474"/>
        <dbReference type="ChEBI" id="CHEBI:58394"/>
        <dbReference type="EC" id="4.2.3.4"/>
    </reaction>
</comment>
<comment type="cofactor">
    <cofactor evidence="1">
        <name>Co(2+)</name>
        <dbReference type="ChEBI" id="CHEBI:48828"/>
    </cofactor>
    <cofactor evidence="1">
        <name>Zn(2+)</name>
        <dbReference type="ChEBI" id="CHEBI:29105"/>
    </cofactor>
    <text evidence="1">Binds 1 divalent metal cation per subunit. Can use either Co(2+) or Zn(2+).</text>
</comment>
<comment type="cofactor">
    <cofactor evidence="1">
        <name>NAD(+)</name>
        <dbReference type="ChEBI" id="CHEBI:57540"/>
    </cofactor>
</comment>
<comment type="pathway">
    <text evidence="1">Metabolic intermediate biosynthesis; chorismate biosynthesis; chorismate from D-erythrose 4-phosphate and phosphoenolpyruvate: step 2/7.</text>
</comment>
<comment type="subcellular location">
    <subcellularLocation>
        <location evidence="1">Cytoplasm</location>
    </subcellularLocation>
</comment>
<comment type="similarity">
    <text evidence="1">Belongs to the sugar phosphate cyclases superfamily. Dehydroquinate synthase family.</text>
</comment>
<name>AROB_SALA4</name>
<organism>
    <name type="scientific">Salmonella agona (strain SL483)</name>
    <dbReference type="NCBI Taxonomy" id="454166"/>
    <lineage>
        <taxon>Bacteria</taxon>
        <taxon>Pseudomonadati</taxon>
        <taxon>Pseudomonadota</taxon>
        <taxon>Gammaproteobacteria</taxon>
        <taxon>Enterobacterales</taxon>
        <taxon>Enterobacteriaceae</taxon>
        <taxon>Salmonella</taxon>
    </lineage>
</organism>
<evidence type="ECO:0000255" key="1">
    <source>
        <dbReference type="HAMAP-Rule" id="MF_00110"/>
    </source>
</evidence>
<reference key="1">
    <citation type="journal article" date="2011" name="J. Bacteriol.">
        <title>Comparative genomics of 28 Salmonella enterica isolates: evidence for CRISPR-mediated adaptive sublineage evolution.</title>
        <authorList>
            <person name="Fricke W.F."/>
            <person name="Mammel M.K."/>
            <person name="McDermott P.F."/>
            <person name="Tartera C."/>
            <person name="White D.G."/>
            <person name="Leclerc J.E."/>
            <person name="Ravel J."/>
            <person name="Cebula T.A."/>
        </authorList>
    </citation>
    <scope>NUCLEOTIDE SEQUENCE [LARGE SCALE GENOMIC DNA]</scope>
    <source>
        <strain>SL483</strain>
    </source>
</reference>
<sequence length="362" mass="38680">MERITVTLGERSYPITIAAGLFNEPASFLPLKSGDQVMLVTNETLAPLYLDKVRGVLERAGVNVDSVILPDGEQYKSLTVLDTVFTALLKKPHGRDTTLVALGGGVIGDLTGFAAASYQRGVRFIQVPTTLLSQVDSSVGGKTAVNHPLGKNMIGAFYQPASVVVDLDCLKTLPARELASGLAEVIKYGIILDADFFTWLEGNLDALLRLDGPAMAYCIRRCCELKAEVVAADEREAGLRALLNLGHTFGHAIEAEMGYGNWLHGEAVAAGIVMAARASERLGQFSSADTQRIIALLERAGLPVNGPCEMSAQDYLPHMLRDKKVLAGELRLVLPLAIGKSEVRGGVSHEVVLSAIADCQQA</sequence>
<keyword id="KW-0028">Amino-acid biosynthesis</keyword>
<keyword id="KW-0057">Aromatic amino acid biosynthesis</keyword>
<keyword id="KW-0170">Cobalt</keyword>
<keyword id="KW-0963">Cytoplasm</keyword>
<keyword id="KW-0456">Lyase</keyword>
<keyword id="KW-0479">Metal-binding</keyword>
<keyword id="KW-0520">NAD</keyword>
<keyword id="KW-0547">Nucleotide-binding</keyword>
<keyword id="KW-0862">Zinc</keyword>